<name>TRUB_RALPJ</name>
<feature type="chain" id="PRO_1000136816" description="tRNA pseudouridine synthase B">
    <location>
        <begin position="1"/>
        <end position="318"/>
    </location>
</feature>
<feature type="active site" description="Nucleophile" evidence="1">
    <location>
        <position position="54"/>
    </location>
</feature>
<dbReference type="EC" id="5.4.99.25" evidence="1"/>
<dbReference type="EMBL" id="CP001068">
    <property type="protein sequence ID" value="ACD26267.1"/>
    <property type="molecule type" value="Genomic_DNA"/>
</dbReference>
<dbReference type="SMR" id="B2UAA5"/>
<dbReference type="STRING" id="402626.Rpic_1119"/>
<dbReference type="KEGG" id="rpi:Rpic_1119"/>
<dbReference type="PATRIC" id="fig|402626.5.peg.2325"/>
<dbReference type="eggNOG" id="COG0130">
    <property type="taxonomic scope" value="Bacteria"/>
</dbReference>
<dbReference type="HOGENOM" id="CLU_032087_0_3_4"/>
<dbReference type="GO" id="GO:0003723">
    <property type="term" value="F:RNA binding"/>
    <property type="evidence" value="ECO:0007669"/>
    <property type="project" value="InterPro"/>
</dbReference>
<dbReference type="GO" id="GO:0160148">
    <property type="term" value="F:tRNA pseudouridine(55) synthase activity"/>
    <property type="evidence" value="ECO:0007669"/>
    <property type="project" value="UniProtKB-EC"/>
</dbReference>
<dbReference type="GO" id="GO:1990481">
    <property type="term" value="P:mRNA pseudouridine synthesis"/>
    <property type="evidence" value="ECO:0007669"/>
    <property type="project" value="TreeGrafter"/>
</dbReference>
<dbReference type="GO" id="GO:0031119">
    <property type="term" value="P:tRNA pseudouridine synthesis"/>
    <property type="evidence" value="ECO:0007669"/>
    <property type="project" value="UniProtKB-UniRule"/>
</dbReference>
<dbReference type="CDD" id="cd02573">
    <property type="entry name" value="PseudoU_synth_EcTruB"/>
    <property type="match status" value="1"/>
</dbReference>
<dbReference type="CDD" id="cd21152">
    <property type="entry name" value="PUA_TruB_bacterial"/>
    <property type="match status" value="1"/>
</dbReference>
<dbReference type="FunFam" id="3.30.2350.10:FF:000011">
    <property type="entry name" value="tRNA pseudouridine synthase B"/>
    <property type="match status" value="1"/>
</dbReference>
<dbReference type="Gene3D" id="3.30.2350.10">
    <property type="entry name" value="Pseudouridine synthase"/>
    <property type="match status" value="1"/>
</dbReference>
<dbReference type="HAMAP" id="MF_01080">
    <property type="entry name" value="TruB_bact"/>
    <property type="match status" value="1"/>
</dbReference>
<dbReference type="InterPro" id="IPR020103">
    <property type="entry name" value="PsdUridine_synth_cat_dom_sf"/>
</dbReference>
<dbReference type="InterPro" id="IPR002501">
    <property type="entry name" value="PsdUridine_synth_N"/>
</dbReference>
<dbReference type="InterPro" id="IPR015947">
    <property type="entry name" value="PUA-like_sf"/>
</dbReference>
<dbReference type="InterPro" id="IPR014780">
    <property type="entry name" value="tRNA_psdUridine_synth_TruB"/>
</dbReference>
<dbReference type="InterPro" id="IPR015240">
    <property type="entry name" value="tRNA_sdUridine_synth_fam1_C"/>
</dbReference>
<dbReference type="InterPro" id="IPR032819">
    <property type="entry name" value="TruB_C"/>
</dbReference>
<dbReference type="NCBIfam" id="TIGR00431">
    <property type="entry name" value="TruB"/>
    <property type="match status" value="1"/>
</dbReference>
<dbReference type="PANTHER" id="PTHR13767:SF2">
    <property type="entry name" value="PSEUDOURIDYLATE SYNTHASE TRUB1"/>
    <property type="match status" value="1"/>
</dbReference>
<dbReference type="PANTHER" id="PTHR13767">
    <property type="entry name" value="TRNA-PSEUDOURIDINE SYNTHASE"/>
    <property type="match status" value="1"/>
</dbReference>
<dbReference type="Pfam" id="PF09157">
    <property type="entry name" value="TruB-C_2"/>
    <property type="match status" value="1"/>
</dbReference>
<dbReference type="Pfam" id="PF16198">
    <property type="entry name" value="TruB_C_2"/>
    <property type="match status" value="1"/>
</dbReference>
<dbReference type="Pfam" id="PF01509">
    <property type="entry name" value="TruB_N"/>
    <property type="match status" value="1"/>
</dbReference>
<dbReference type="SUPFAM" id="SSF55120">
    <property type="entry name" value="Pseudouridine synthase"/>
    <property type="match status" value="1"/>
</dbReference>
<dbReference type="SUPFAM" id="SSF88697">
    <property type="entry name" value="PUA domain-like"/>
    <property type="match status" value="1"/>
</dbReference>
<organism>
    <name type="scientific">Ralstonia pickettii (strain 12J)</name>
    <dbReference type="NCBI Taxonomy" id="402626"/>
    <lineage>
        <taxon>Bacteria</taxon>
        <taxon>Pseudomonadati</taxon>
        <taxon>Pseudomonadota</taxon>
        <taxon>Betaproteobacteria</taxon>
        <taxon>Burkholderiales</taxon>
        <taxon>Burkholderiaceae</taxon>
        <taxon>Ralstonia</taxon>
    </lineage>
</organism>
<comment type="function">
    <text evidence="1">Responsible for synthesis of pseudouridine from uracil-55 in the psi GC loop of transfer RNAs.</text>
</comment>
<comment type="catalytic activity">
    <reaction evidence="1">
        <text>uridine(55) in tRNA = pseudouridine(55) in tRNA</text>
        <dbReference type="Rhea" id="RHEA:42532"/>
        <dbReference type="Rhea" id="RHEA-COMP:10101"/>
        <dbReference type="Rhea" id="RHEA-COMP:10102"/>
        <dbReference type="ChEBI" id="CHEBI:65314"/>
        <dbReference type="ChEBI" id="CHEBI:65315"/>
        <dbReference type="EC" id="5.4.99.25"/>
    </reaction>
</comment>
<comment type="similarity">
    <text evidence="1">Belongs to the pseudouridine synthase TruB family. Type 1 subfamily.</text>
</comment>
<gene>
    <name evidence="1" type="primary">truB</name>
    <name type="ordered locus">Rpic_1119</name>
</gene>
<proteinExistence type="inferred from homology"/>
<keyword id="KW-0413">Isomerase</keyword>
<keyword id="KW-0819">tRNA processing</keyword>
<accession>B2UAA5</accession>
<protein>
    <recommendedName>
        <fullName evidence="1">tRNA pseudouridine synthase B</fullName>
        <ecNumber evidence="1">5.4.99.25</ecNumber>
    </recommendedName>
    <alternativeName>
        <fullName evidence="1">tRNA pseudouridine(55) synthase</fullName>
        <shortName evidence="1">Psi55 synthase</shortName>
    </alternativeName>
    <alternativeName>
        <fullName evidence="1">tRNA pseudouridylate synthase</fullName>
    </alternativeName>
    <alternativeName>
        <fullName evidence="1">tRNA-uridine isomerase</fullName>
    </alternativeName>
</protein>
<sequence>MAEHQVPRPQKPPRRDVHGVLLLDKPIGWSSNDALIRAKRLLWAKKAGHTGTLDPLATGLLPLCFGEATKFSQDLLDADKTYETVVRLGIRTSTADAEGEVLSERPVSVTPEQLQAAIARFVGEIDQVPPMHSALKKDGKPLYEYARAGQTVERAARRVTIYAIDVLATDLQSAEPTVTLRVSCSKGTYIRTLGEDIGEALGCGGHLVALRRTQVGNLTLDGAVTLEALDAAAEDARGALLAPVDALLQTLPRVELDAQESRRFLHGQRLPLQLALPNADQVRVYGVRDAIAADATASLLGVAAWQGGVLRPERLVHL</sequence>
<evidence type="ECO:0000255" key="1">
    <source>
        <dbReference type="HAMAP-Rule" id="MF_01080"/>
    </source>
</evidence>
<reference key="1">
    <citation type="submission" date="2008-05" db="EMBL/GenBank/DDBJ databases">
        <title>Complete sequence of chromosome 1 of Ralstonia pickettii 12J.</title>
        <authorList>
            <person name="Lucas S."/>
            <person name="Copeland A."/>
            <person name="Lapidus A."/>
            <person name="Glavina del Rio T."/>
            <person name="Dalin E."/>
            <person name="Tice H."/>
            <person name="Bruce D."/>
            <person name="Goodwin L."/>
            <person name="Pitluck S."/>
            <person name="Meincke L."/>
            <person name="Brettin T."/>
            <person name="Detter J.C."/>
            <person name="Han C."/>
            <person name="Kuske C.R."/>
            <person name="Schmutz J."/>
            <person name="Larimer F."/>
            <person name="Land M."/>
            <person name="Hauser L."/>
            <person name="Kyrpides N."/>
            <person name="Mikhailova N."/>
            <person name="Marsh T."/>
            <person name="Richardson P."/>
        </authorList>
    </citation>
    <scope>NUCLEOTIDE SEQUENCE [LARGE SCALE GENOMIC DNA]</scope>
    <source>
        <strain>12J</strain>
    </source>
</reference>